<accession>Q13TI5</accession>
<keyword id="KW-1185">Reference proteome</keyword>
<keyword id="KW-0687">Ribonucleoprotein</keyword>
<keyword id="KW-0689">Ribosomal protein</keyword>
<keyword id="KW-0694">RNA-binding</keyword>
<keyword id="KW-0699">rRNA-binding</keyword>
<evidence type="ECO:0000255" key="1">
    <source>
        <dbReference type="HAMAP-Rule" id="MF_01365"/>
    </source>
</evidence>
<evidence type="ECO:0000305" key="2"/>
<reference key="1">
    <citation type="journal article" date="2006" name="Proc. Natl. Acad. Sci. U.S.A.">
        <title>Burkholderia xenovorans LB400 harbors a multi-replicon, 9.73-Mbp genome shaped for versatility.</title>
        <authorList>
            <person name="Chain P.S.G."/>
            <person name="Denef V.J."/>
            <person name="Konstantinidis K.T."/>
            <person name="Vergez L.M."/>
            <person name="Agullo L."/>
            <person name="Reyes V.L."/>
            <person name="Hauser L."/>
            <person name="Cordova M."/>
            <person name="Gomez L."/>
            <person name="Gonzalez M."/>
            <person name="Land M."/>
            <person name="Lao V."/>
            <person name="Larimer F."/>
            <person name="LiPuma J.J."/>
            <person name="Mahenthiralingam E."/>
            <person name="Malfatti S.A."/>
            <person name="Marx C.J."/>
            <person name="Parnell J.J."/>
            <person name="Ramette A."/>
            <person name="Richardson P."/>
            <person name="Seeger M."/>
            <person name="Smith D."/>
            <person name="Spilker T."/>
            <person name="Sul W.J."/>
            <person name="Tsoi T.V."/>
            <person name="Ulrich L.E."/>
            <person name="Zhulin I.B."/>
            <person name="Tiedje J.M."/>
        </authorList>
    </citation>
    <scope>NUCLEOTIDE SEQUENCE [LARGE SCALE GENOMIC DNA]</scope>
    <source>
        <strain>LB400</strain>
    </source>
</reference>
<feature type="chain" id="PRO_0000265236" description="Large ribosomal subunit protein uL6">
    <location>
        <begin position="1"/>
        <end position="176"/>
    </location>
</feature>
<sequence>MSRVGKSPVALQGAEVALSDERITVKGPLGTISQAANSLVKVVNDNGTLKFEPVDESREANAMSGTMRALVANMVNGVTKGFERKLTLVGVGYRAQAQGDKLNLSLGFSHPVVHQMPEGIKAETPTQTEIVIKGINKQQVGQVAAEVRGYRPPEPYKGKGVRYANEVVILKETKKK</sequence>
<proteinExistence type="inferred from homology"/>
<comment type="function">
    <text evidence="1">This protein binds to the 23S rRNA, and is important in its secondary structure. It is located near the subunit interface in the base of the L7/L12 stalk, and near the tRNA binding site of the peptidyltransferase center.</text>
</comment>
<comment type="subunit">
    <text evidence="1">Part of the 50S ribosomal subunit.</text>
</comment>
<comment type="similarity">
    <text evidence="1">Belongs to the universal ribosomal protein uL6 family.</text>
</comment>
<protein>
    <recommendedName>
        <fullName evidence="1">Large ribosomal subunit protein uL6</fullName>
    </recommendedName>
    <alternativeName>
        <fullName evidence="2">50S ribosomal protein L6</fullName>
    </alternativeName>
</protein>
<organism>
    <name type="scientific">Paraburkholderia xenovorans (strain LB400)</name>
    <dbReference type="NCBI Taxonomy" id="266265"/>
    <lineage>
        <taxon>Bacteria</taxon>
        <taxon>Pseudomonadati</taxon>
        <taxon>Pseudomonadota</taxon>
        <taxon>Betaproteobacteria</taxon>
        <taxon>Burkholderiales</taxon>
        <taxon>Burkholderiaceae</taxon>
        <taxon>Paraburkholderia</taxon>
    </lineage>
</organism>
<name>RL6_PARXL</name>
<gene>
    <name evidence="1" type="primary">rplF</name>
    <name type="ordered locus">Bxeno_A4066</name>
    <name type="ORF">Bxe_A0329</name>
</gene>
<dbReference type="EMBL" id="CP000270">
    <property type="protein sequence ID" value="ABE32604.1"/>
    <property type="molecule type" value="Genomic_DNA"/>
</dbReference>
<dbReference type="RefSeq" id="WP_011490051.1">
    <property type="nucleotide sequence ID" value="NC_007951.1"/>
</dbReference>
<dbReference type="SMR" id="Q13TI5"/>
<dbReference type="STRING" id="266265.Bxe_A0329"/>
<dbReference type="KEGG" id="bxb:DR64_2499"/>
<dbReference type="KEGG" id="bxe:Bxe_A0329"/>
<dbReference type="PATRIC" id="fig|266265.5.peg.4296"/>
<dbReference type="eggNOG" id="COG0097">
    <property type="taxonomic scope" value="Bacteria"/>
</dbReference>
<dbReference type="OrthoDB" id="9805007at2"/>
<dbReference type="Proteomes" id="UP000001817">
    <property type="component" value="Chromosome 1"/>
</dbReference>
<dbReference type="GO" id="GO:0022625">
    <property type="term" value="C:cytosolic large ribosomal subunit"/>
    <property type="evidence" value="ECO:0007669"/>
    <property type="project" value="TreeGrafter"/>
</dbReference>
<dbReference type="GO" id="GO:0019843">
    <property type="term" value="F:rRNA binding"/>
    <property type="evidence" value="ECO:0007669"/>
    <property type="project" value="UniProtKB-UniRule"/>
</dbReference>
<dbReference type="GO" id="GO:0003735">
    <property type="term" value="F:structural constituent of ribosome"/>
    <property type="evidence" value="ECO:0007669"/>
    <property type="project" value="InterPro"/>
</dbReference>
<dbReference type="GO" id="GO:0002181">
    <property type="term" value="P:cytoplasmic translation"/>
    <property type="evidence" value="ECO:0007669"/>
    <property type="project" value="TreeGrafter"/>
</dbReference>
<dbReference type="FunFam" id="3.90.930.12:FF:000001">
    <property type="entry name" value="50S ribosomal protein L6"/>
    <property type="match status" value="1"/>
</dbReference>
<dbReference type="Gene3D" id="3.90.930.12">
    <property type="entry name" value="Ribosomal protein L6, alpha-beta domain"/>
    <property type="match status" value="2"/>
</dbReference>
<dbReference type="HAMAP" id="MF_01365_B">
    <property type="entry name" value="Ribosomal_uL6_B"/>
    <property type="match status" value="1"/>
</dbReference>
<dbReference type="InterPro" id="IPR000702">
    <property type="entry name" value="Ribosomal_uL6-like"/>
</dbReference>
<dbReference type="InterPro" id="IPR036789">
    <property type="entry name" value="Ribosomal_uL6-like_a/b-dom_sf"/>
</dbReference>
<dbReference type="InterPro" id="IPR020040">
    <property type="entry name" value="Ribosomal_uL6_a/b-dom"/>
</dbReference>
<dbReference type="InterPro" id="IPR019906">
    <property type="entry name" value="Ribosomal_uL6_bac-type"/>
</dbReference>
<dbReference type="InterPro" id="IPR002358">
    <property type="entry name" value="Ribosomal_uL6_CS"/>
</dbReference>
<dbReference type="NCBIfam" id="TIGR03654">
    <property type="entry name" value="L6_bact"/>
    <property type="match status" value="1"/>
</dbReference>
<dbReference type="PANTHER" id="PTHR11655">
    <property type="entry name" value="60S/50S RIBOSOMAL PROTEIN L6/L9"/>
    <property type="match status" value="1"/>
</dbReference>
<dbReference type="PANTHER" id="PTHR11655:SF14">
    <property type="entry name" value="LARGE RIBOSOMAL SUBUNIT PROTEIN UL6M"/>
    <property type="match status" value="1"/>
</dbReference>
<dbReference type="Pfam" id="PF00347">
    <property type="entry name" value="Ribosomal_L6"/>
    <property type="match status" value="2"/>
</dbReference>
<dbReference type="PIRSF" id="PIRSF002162">
    <property type="entry name" value="Ribosomal_L6"/>
    <property type="match status" value="1"/>
</dbReference>
<dbReference type="PRINTS" id="PR00059">
    <property type="entry name" value="RIBOSOMALL6"/>
</dbReference>
<dbReference type="SUPFAM" id="SSF56053">
    <property type="entry name" value="Ribosomal protein L6"/>
    <property type="match status" value="2"/>
</dbReference>
<dbReference type="PROSITE" id="PS00525">
    <property type="entry name" value="RIBOSOMAL_L6_1"/>
    <property type="match status" value="1"/>
</dbReference>